<sequence>MSRIKIILLACMLALLFSGCVENSAVFEKNTATLKENTINADSVRGYDIASANNAFAFDMYSQLTQQVTGDYENILFSPYSISAAMAICYEGAENTTKEQISNVFYFPTNKTVLKVRLERINDRINSGSGDYELQTANALWIQEGYPVKEEYLFNVKKYYDGEVANLDFVRKPDDSRNTINEWVETRTSDKIKDLVPKSMITPDTRIIITNAIYFNGKWAYTFDKQLTEKRAFYPANGEEASVDMMYMYNNFNYGENSKAKIIELPYKGNDLSMYIVLPKDNNIKEFETEFTINDYTELKNEMDSTVNVDILIPKFKFETKTELSDSFVEMGVVDAFRQANFSGISNSPLKVSEVIHQTFIDVKEEGTEAAAATGVGMTVGMDFSWDSKQREFKADHPFMFFIEDRRTNCILFMGKVEYPEYKNDT</sequence>
<evidence type="ECO:0000255" key="1"/>
<evidence type="ECO:0000305" key="2"/>
<protein>
    <recommendedName>
        <fullName>Uncharacterized serpin-like protein MM_2675</fullName>
    </recommendedName>
</protein>
<accession>Q8PTN8</accession>
<proteinExistence type="inferred from homology"/>
<keyword id="KW-0646">Protease inhibitor</keyword>
<keyword id="KW-0722">Serine protease inhibitor</keyword>
<name>Y2678_METMA</name>
<feature type="chain" id="PRO_0000094163" description="Uncharacterized serpin-like protein MM_2675">
    <location>
        <begin position="1"/>
        <end position="426"/>
    </location>
</feature>
<feature type="site" description="Reactive bond" evidence="1">
    <location>
        <begin position="381"/>
        <end position="382"/>
    </location>
</feature>
<dbReference type="EMBL" id="AE008384">
    <property type="protein sequence ID" value="AAM32371.1"/>
    <property type="molecule type" value="Genomic_DNA"/>
</dbReference>
<dbReference type="RefSeq" id="WP_011034586.1">
    <property type="nucleotide sequence ID" value="NC_003901.1"/>
</dbReference>
<dbReference type="SMR" id="Q8PTN8"/>
<dbReference type="MEROPS" id="I04.089"/>
<dbReference type="KEGG" id="mma:MM_2675"/>
<dbReference type="PATRIC" id="fig|192952.21.peg.3082"/>
<dbReference type="eggNOG" id="arCOG04933">
    <property type="taxonomic scope" value="Archaea"/>
</dbReference>
<dbReference type="HOGENOM" id="CLU_023330_0_2_2"/>
<dbReference type="Proteomes" id="UP000000595">
    <property type="component" value="Chromosome"/>
</dbReference>
<dbReference type="GO" id="GO:0005615">
    <property type="term" value="C:extracellular space"/>
    <property type="evidence" value="ECO:0007669"/>
    <property type="project" value="InterPro"/>
</dbReference>
<dbReference type="GO" id="GO:0004867">
    <property type="term" value="F:serine-type endopeptidase inhibitor activity"/>
    <property type="evidence" value="ECO:0007669"/>
    <property type="project" value="UniProtKB-KW"/>
</dbReference>
<dbReference type="CDD" id="cd19591">
    <property type="entry name" value="serpin_like"/>
    <property type="match status" value="1"/>
</dbReference>
<dbReference type="Gene3D" id="2.30.39.10">
    <property type="entry name" value="Alpha-1-antitrypsin, domain 1"/>
    <property type="match status" value="1"/>
</dbReference>
<dbReference type="Gene3D" id="3.30.497.10">
    <property type="entry name" value="Antithrombin, subunit I, domain 2"/>
    <property type="match status" value="1"/>
</dbReference>
<dbReference type="InterPro" id="IPR023795">
    <property type="entry name" value="Serpin_CS"/>
</dbReference>
<dbReference type="InterPro" id="IPR023796">
    <property type="entry name" value="Serpin_dom"/>
</dbReference>
<dbReference type="InterPro" id="IPR000215">
    <property type="entry name" value="Serpin_fam"/>
</dbReference>
<dbReference type="InterPro" id="IPR036186">
    <property type="entry name" value="Serpin_sf"/>
</dbReference>
<dbReference type="InterPro" id="IPR042178">
    <property type="entry name" value="Serpin_sf_1"/>
</dbReference>
<dbReference type="InterPro" id="IPR042185">
    <property type="entry name" value="Serpin_sf_2"/>
</dbReference>
<dbReference type="PANTHER" id="PTHR11461:SF211">
    <property type="entry name" value="GH10112P-RELATED"/>
    <property type="match status" value="1"/>
</dbReference>
<dbReference type="PANTHER" id="PTHR11461">
    <property type="entry name" value="SERINE PROTEASE INHIBITOR, SERPIN"/>
    <property type="match status" value="1"/>
</dbReference>
<dbReference type="Pfam" id="PF00079">
    <property type="entry name" value="Serpin"/>
    <property type="match status" value="1"/>
</dbReference>
<dbReference type="SMART" id="SM00093">
    <property type="entry name" value="SERPIN"/>
    <property type="match status" value="1"/>
</dbReference>
<dbReference type="SUPFAM" id="SSF56574">
    <property type="entry name" value="Serpins"/>
    <property type="match status" value="1"/>
</dbReference>
<dbReference type="PROSITE" id="PS51257">
    <property type="entry name" value="PROKAR_LIPOPROTEIN"/>
    <property type="match status" value="1"/>
</dbReference>
<dbReference type="PROSITE" id="PS00284">
    <property type="entry name" value="SERPIN"/>
    <property type="match status" value="1"/>
</dbReference>
<reference key="1">
    <citation type="journal article" date="2002" name="J. Mol. Microbiol. Biotechnol.">
        <title>The genome of Methanosarcina mazei: evidence for lateral gene transfer between Bacteria and Archaea.</title>
        <authorList>
            <person name="Deppenmeier U."/>
            <person name="Johann A."/>
            <person name="Hartsch T."/>
            <person name="Merkl R."/>
            <person name="Schmitz R.A."/>
            <person name="Martinez-Arias R."/>
            <person name="Henne A."/>
            <person name="Wiezer A."/>
            <person name="Baeumer S."/>
            <person name="Jacobi C."/>
            <person name="Brueggemann H."/>
            <person name="Lienard T."/>
            <person name="Christmann A."/>
            <person name="Boemecke M."/>
            <person name="Steckel S."/>
            <person name="Bhattacharyya A."/>
            <person name="Lykidis A."/>
            <person name="Overbeek R."/>
            <person name="Klenk H.-P."/>
            <person name="Gunsalus R.P."/>
            <person name="Fritz H.-J."/>
            <person name="Gottschalk G."/>
        </authorList>
    </citation>
    <scope>NUCLEOTIDE SEQUENCE [LARGE SCALE GENOMIC DNA]</scope>
    <source>
        <strain>ATCC BAA-159 / DSM 3647 / Goe1 / Go1 / JCM 11833 / OCM 88</strain>
    </source>
</reference>
<gene>
    <name type="ordered locus">MM_2675</name>
</gene>
<comment type="similarity">
    <text evidence="2">Belongs to the serpin family.</text>
</comment>
<organism>
    <name type="scientific">Methanosarcina mazei (strain ATCC BAA-159 / DSM 3647 / Goe1 / Go1 / JCM 11833 / OCM 88)</name>
    <name type="common">Methanosarcina frisia</name>
    <dbReference type="NCBI Taxonomy" id="192952"/>
    <lineage>
        <taxon>Archaea</taxon>
        <taxon>Methanobacteriati</taxon>
        <taxon>Methanobacteriota</taxon>
        <taxon>Stenosarchaea group</taxon>
        <taxon>Methanomicrobia</taxon>
        <taxon>Methanosarcinales</taxon>
        <taxon>Methanosarcinaceae</taxon>
        <taxon>Methanosarcina</taxon>
    </lineage>
</organism>